<accession>Q2G5F4</accession>
<evidence type="ECO:0000255" key="1">
    <source>
        <dbReference type="HAMAP-Rule" id="MF_01343"/>
    </source>
</evidence>
<evidence type="ECO:0000256" key="2">
    <source>
        <dbReference type="SAM" id="MobiDB-lite"/>
    </source>
</evidence>
<evidence type="ECO:0000305" key="3"/>
<organism>
    <name type="scientific">Novosphingobium aromaticivorans (strain ATCC 700278 / DSM 12444 / CCUG 56034 / CIP 105152 / NBRC 16084 / F199)</name>
    <dbReference type="NCBI Taxonomy" id="279238"/>
    <lineage>
        <taxon>Bacteria</taxon>
        <taxon>Pseudomonadati</taxon>
        <taxon>Pseudomonadota</taxon>
        <taxon>Alphaproteobacteria</taxon>
        <taxon>Sphingomonadales</taxon>
        <taxon>Sphingomonadaceae</taxon>
        <taxon>Novosphingobium</taxon>
    </lineage>
</organism>
<feature type="chain" id="PRO_0000255512" description="Small ribosomal subunit protein uS15">
    <location>
        <begin position="1"/>
        <end position="89"/>
    </location>
</feature>
<feature type="region of interest" description="Disordered" evidence="2">
    <location>
        <begin position="1"/>
        <end position="24"/>
    </location>
</feature>
<feature type="compositionally biased region" description="Basic and acidic residues" evidence="2">
    <location>
        <begin position="1"/>
        <end position="10"/>
    </location>
</feature>
<name>RS15_NOVAD</name>
<sequence>MSITAEKKQEVIQSNARAEGDTGSPEVQVAILTSRIQTLTEHFKSHHKDNHSRRGLLMMVNKRRSLLDYLKKKDVERYNALIQKLGLRK</sequence>
<protein>
    <recommendedName>
        <fullName evidence="1">Small ribosomal subunit protein uS15</fullName>
    </recommendedName>
    <alternativeName>
        <fullName evidence="3">30S ribosomal protein S15</fullName>
    </alternativeName>
</protein>
<reference key="1">
    <citation type="submission" date="2006-01" db="EMBL/GenBank/DDBJ databases">
        <title>Complete sequence of Novosphingobium aromaticivorans DSM 12444.</title>
        <authorList>
            <consortium name="US DOE Joint Genome Institute"/>
            <person name="Copeland A."/>
            <person name="Lucas S."/>
            <person name="Lapidus A."/>
            <person name="Barry K."/>
            <person name="Detter J.C."/>
            <person name="Glavina T."/>
            <person name="Hammon N."/>
            <person name="Israni S."/>
            <person name="Pitluck S."/>
            <person name="Chain P."/>
            <person name="Malfatti S."/>
            <person name="Shin M."/>
            <person name="Vergez L."/>
            <person name="Schmutz J."/>
            <person name="Larimer F."/>
            <person name="Land M."/>
            <person name="Kyrpides N."/>
            <person name="Ivanova N."/>
            <person name="Fredrickson J."/>
            <person name="Balkwill D."/>
            <person name="Romine M.F."/>
            <person name="Richardson P."/>
        </authorList>
    </citation>
    <scope>NUCLEOTIDE SEQUENCE [LARGE SCALE GENOMIC DNA]</scope>
    <source>
        <strain>ATCC 700278 / DSM 12444 / CCUG 56034 / CIP 105152 / NBRC 16084 / F199</strain>
    </source>
</reference>
<dbReference type="EMBL" id="CP000248">
    <property type="protein sequence ID" value="ABD26919.1"/>
    <property type="molecule type" value="Genomic_DNA"/>
</dbReference>
<dbReference type="RefSeq" id="WP_011446125.1">
    <property type="nucleotide sequence ID" value="NC_007794.1"/>
</dbReference>
<dbReference type="SMR" id="Q2G5F4"/>
<dbReference type="STRING" id="279238.Saro_2483"/>
<dbReference type="KEGG" id="nar:Saro_2483"/>
<dbReference type="eggNOG" id="COG0184">
    <property type="taxonomic scope" value="Bacteria"/>
</dbReference>
<dbReference type="HOGENOM" id="CLU_148518_0_0_5"/>
<dbReference type="Proteomes" id="UP000009134">
    <property type="component" value="Chromosome"/>
</dbReference>
<dbReference type="GO" id="GO:0022627">
    <property type="term" value="C:cytosolic small ribosomal subunit"/>
    <property type="evidence" value="ECO:0007669"/>
    <property type="project" value="TreeGrafter"/>
</dbReference>
<dbReference type="GO" id="GO:0019843">
    <property type="term" value="F:rRNA binding"/>
    <property type="evidence" value="ECO:0007669"/>
    <property type="project" value="UniProtKB-UniRule"/>
</dbReference>
<dbReference type="GO" id="GO:0003735">
    <property type="term" value="F:structural constituent of ribosome"/>
    <property type="evidence" value="ECO:0007669"/>
    <property type="project" value="InterPro"/>
</dbReference>
<dbReference type="GO" id="GO:0006412">
    <property type="term" value="P:translation"/>
    <property type="evidence" value="ECO:0007669"/>
    <property type="project" value="UniProtKB-UniRule"/>
</dbReference>
<dbReference type="CDD" id="cd00353">
    <property type="entry name" value="Ribosomal_S15p_S13e"/>
    <property type="match status" value="1"/>
</dbReference>
<dbReference type="FunFam" id="1.10.287.10:FF:000002">
    <property type="entry name" value="30S ribosomal protein S15"/>
    <property type="match status" value="1"/>
</dbReference>
<dbReference type="Gene3D" id="6.10.250.3130">
    <property type="match status" value="1"/>
</dbReference>
<dbReference type="Gene3D" id="1.10.287.10">
    <property type="entry name" value="S15/NS1, RNA-binding"/>
    <property type="match status" value="1"/>
</dbReference>
<dbReference type="HAMAP" id="MF_01343_B">
    <property type="entry name" value="Ribosomal_uS15_B"/>
    <property type="match status" value="1"/>
</dbReference>
<dbReference type="InterPro" id="IPR000589">
    <property type="entry name" value="Ribosomal_uS15"/>
</dbReference>
<dbReference type="InterPro" id="IPR005290">
    <property type="entry name" value="Ribosomal_uS15_bac-type"/>
</dbReference>
<dbReference type="InterPro" id="IPR009068">
    <property type="entry name" value="uS15_NS1_RNA-bd_sf"/>
</dbReference>
<dbReference type="NCBIfam" id="TIGR00952">
    <property type="entry name" value="S15_bact"/>
    <property type="match status" value="1"/>
</dbReference>
<dbReference type="PANTHER" id="PTHR23321">
    <property type="entry name" value="RIBOSOMAL PROTEIN S15, BACTERIAL AND ORGANELLAR"/>
    <property type="match status" value="1"/>
</dbReference>
<dbReference type="PANTHER" id="PTHR23321:SF26">
    <property type="entry name" value="SMALL RIBOSOMAL SUBUNIT PROTEIN US15M"/>
    <property type="match status" value="1"/>
</dbReference>
<dbReference type="Pfam" id="PF00312">
    <property type="entry name" value="Ribosomal_S15"/>
    <property type="match status" value="1"/>
</dbReference>
<dbReference type="SMART" id="SM01387">
    <property type="entry name" value="Ribosomal_S15"/>
    <property type="match status" value="1"/>
</dbReference>
<dbReference type="SUPFAM" id="SSF47060">
    <property type="entry name" value="S15/NS1 RNA-binding domain"/>
    <property type="match status" value="1"/>
</dbReference>
<dbReference type="PROSITE" id="PS00362">
    <property type="entry name" value="RIBOSOMAL_S15"/>
    <property type="match status" value="1"/>
</dbReference>
<keyword id="KW-1185">Reference proteome</keyword>
<keyword id="KW-0687">Ribonucleoprotein</keyword>
<keyword id="KW-0689">Ribosomal protein</keyword>
<keyword id="KW-0694">RNA-binding</keyword>
<keyword id="KW-0699">rRNA-binding</keyword>
<proteinExistence type="inferred from homology"/>
<comment type="function">
    <text evidence="1">One of the primary rRNA binding proteins, it binds directly to 16S rRNA where it helps nucleate assembly of the platform of the 30S subunit by binding and bridging several RNA helices of the 16S rRNA.</text>
</comment>
<comment type="function">
    <text evidence="1">Forms an intersubunit bridge (bridge B4) with the 23S rRNA of the 50S subunit in the ribosome.</text>
</comment>
<comment type="subunit">
    <text evidence="1">Part of the 30S ribosomal subunit. Forms a bridge to the 50S subunit in the 70S ribosome, contacting the 23S rRNA.</text>
</comment>
<comment type="similarity">
    <text evidence="1">Belongs to the universal ribosomal protein uS15 family.</text>
</comment>
<gene>
    <name evidence="1" type="primary">rpsO</name>
    <name type="ordered locus">Saro_2483</name>
</gene>